<proteinExistence type="inferred from homology"/>
<keyword id="KW-0027">Amidation</keyword>
<keyword id="KW-0165">Cleavage on pair of basic residues</keyword>
<keyword id="KW-1015">Disulfide bond</keyword>
<keyword id="KW-0964">Secreted</keyword>
<keyword id="KW-0732">Signal</keyword>
<keyword id="KW-0800">Toxin</keyword>
<evidence type="ECO:0000250" key="1"/>
<evidence type="ECO:0000250" key="2">
    <source>
        <dbReference type="UniProtKB" id="Q7Z094"/>
    </source>
</evidence>
<evidence type="ECO:0000255" key="3"/>
<evidence type="ECO:0000303" key="4">
    <source>
    </source>
</evidence>
<evidence type="ECO:0000305" key="5"/>
<evidence type="ECO:0000305" key="6">
    <source>
    </source>
</evidence>
<protein>
    <recommendedName>
        <fullName evidence="4">Conotoxin Eb11.3</fullName>
    </recommendedName>
</protein>
<sequence length="81" mass="9272">MMFRLTSVWCLLVIVLLNSAVDGFIPCTGSEGYCHSHMWCCNSFDVCCELPGPATCTREEACETLRIALGRRAQYKRFFRR</sequence>
<name>I2B3_CONEB</name>
<reference key="1">
    <citation type="journal article" date="2009" name="Peptides">
        <title>Identification of novel I-superfamily conopeptides from several clades of Conus species found in the South China Sea.</title>
        <authorList>
            <person name="Liu Z."/>
            <person name="Xu N."/>
            <person name="Hu J."/>
            <person name="Zhao C."/>
            <person name="Yu Z."/>
            <person name="Dai Q."/>
        </authorList>
    </citation>
    <scope>NUCLEOTIDE SEQUENCE [MRNA]</scope>
    <source>
        <tissue>Venom duct</tissue>
    </source>
</reference>
<dbReference type="EMBL" id="GQ180867">
    <property type="protein sequence ID" value="ACU30729.1"/>
    <property type="molecule type" value="mRNA"/>
</dbReference>
<dbReference type="GO" id="GO:0005576">
    <property type="term" value="C:extracellular region"/>
    <property type="evidence" value="ECO:0007669"/>
    <property type="project" value="UniProtKB-SubCell"/>
</dbReference>
<dbReference type="GO" id="GO:0090729">
    <property type="term" value="F:toxin activity"/>
    <property type="evidence" value="ECO:0007669"/>
    <property type="project" value="UniProtKB-KW"/>
</dbReference>
<comment type="subcellular location">
    <subcellularLocation>
        <location evidence="6">Secreted</location>
    </subcellularLocation>
</comment>
<comment type="tissue specificity">
    <text evidence="6">Expressed by the venom duct.</text>
</comment>
<comment type="domain">
    <text evidence="5">The cysteine framework is XI (C-C-CC-CC-C-C).</text>
</comment>
<comment type="similarity">
    <text evidence="5">Belongs to the conotoxin I2 superfamily.</text>
</comment>
<accession>C7DQB9</accession>
<feature type="signal peptide" evidence="3">
    <location>
        <begin position="1"/>
        <end position="23"/>
    </location>
</feature>
<feature type="peptide" id="PRO_0000392053" description="Conotoxin Eb11.3">
    <location>
        <begin position="24"/>
        <end position="69"/>
    </location>
</feature>
<feature type="propeptide" id="PRO_0000392054" evidence="1">
    <location>
        <begin position="73"/>
        <end position="81"/>
    </location>
</feature>
<feature type="modified residue" description="Leucine amide" evidence="1">
    <location>
        <position position="69"/>
    </location>
</feature>
<feature type="disulfide bond" evidence="2">
    <location>
        <begin position="27"/>
        <end position="41"/>
    </location>
</feature>
<feature type="disulfide bond" evidence="2">
    <location>
        <begin position="34"/>
        <end position="48"/>
    </location>
</feature>
<feature type="disulfide bond" evidence="2">
    <location>
        <begin position="40"/>
        <end position="56"/>
    </location>
</feature>
<feature type="disulfide bond" evidence="2">
    <location>
        <begin position="47"/>
        <end position="62"/>
    </location>
</feature>
<organism>
    <name type="scientific">Conus eburneus</name>
    <name type="common">Ivory cone</name>
    <dbReference type="NCBI Taxonomy" id="101300"/>
    <lineage>
        <taxon>Eukaryota</taxon>
        <taxon>Metazoa</taxon>
        <taxon>Spiralia</taxon>
        <taxon>Lophotrochozoa</taxon>
        <taxon>Mollusca</taxon>
        <taxon>Gastropoda</taxon>
        <taxon>Caenogastropoda</taxon>
        <taxon>Neogastropoda</taxon>
        <taxon>Conoidea</taxon>
        <taxon>Conidae</taxon>
        <taxon>Conus</taxon>
        <taxon>Tesselliconus</taxon>
    </lineage>
</organism>